<proteinExistence type="inferred from homology"/>
<accession>Q080J4</accession>
<name>ACKA_SHEFN</name>
<dbReference type="EC" id="2.7.2.1" evidence="1"/>
<dbReference type="EMBL" id="CP000447">
    <property type="protein sequence ID" value="ABI72321.1"/>
    <property type="molecule type" value="Genomic_DNA"/>
</dbReference>
<dbReference type="RefSeq" id="WP_011637930.1">
    <property type="nucleotide sequence ID" value="NC_008345.1"/>
</dbReference>
<dbReference type="SMR" id="Q080J4"/>
<dbReference type="STRING" id="318167.Sfri_2476"/>
<dbReference type="KEGG" id="sfr:Sfri_2476"/>
<dbReference type="eggNOG" id="COG0282">
    <property type="taxonomic scope" value="Bacteria"/>
</dbReference>
<dbReference type="HOGENOM" id="CLU_020352_0_1_6"/>
<dbReference type="OrthoDB" id="9802453at2"/>
<dbReference type="UniPathway" id="UPA00340">
    <property type="reaction ID" value="UER00458"/>
</dbReference>
<dbReference type="Proteomes" id="UP000000684">
    <property type="component" value="Chromosome"/>
</dbReference>
<dbReference type="GO" id="GO:0005829">
    <property type="term" value="C:cytosol"/>
    <property type="evidence" value="ECO:0007669"/>
    <property type="project" value="TreeGrafter"/>
</dbReference>
<dbReference type="GO" id="GO:0008776">
    <property type="term" value="F:acetate kinase activity"/>
    <property type="evidence" value="ECO:0007669"/>
    <property type="project" value="UniProtKB-UniRule"/>
</dbReference>
<dbReference type="GO" id="GO:0005524">
    <property type="term" value="F:ATP binding"/>
    <property type="evidence" value="ECO:0007669"/>
    <property type="project" value="UniProtKB-KW"/>
</dbReference>
<dbReference type="GO" id="GO:0000287">
    <property type="term" value="F:magnesium ion binding"/>
    <property type="evidence" value="ECO:0007669"/>
    <property type="project" value="UniProtKB-UniRule"/>
</dbReference>
<dbReference type="GO" id="GO:0006083">
    <property type="term" value="P:acetate metabolic process"/>
    <property type="evidence" value="ECO:0007669"/>
    <property type="project" value="TreeGrafter"/>
</dbReference>
<dbReference type="GO" id="GO:0006085">
    <property type="term" value="P:acetyl-CoA biosynthetic process"/>
    <property type="evidence" value="ECO:0007669"/>
    <property type="project" value="UniProtKB-UniRule"/>
</dbReference>
<dbReference type="CDD" id="cd24010">
    <property type="entry name" value="ASKHA_NBD_AcK_PK"/>
    <property type="match status" value="1"/>
</dbReference>
<dbReference type="FunFam" id="3.30.420.40:FF:000041">
    <property type="entry name" value="Acetate kinase"/>
    <property type="match status" value="1"/>
</dbReference>
<dbReference type="Gene3D" id="3.30.420.40">
    <property type="match status" value="2"/>
</dbReference>
<dbReference type="HAMAP" id="MF_00020">
    <property type="entry name" value="Acetate_kinase"/>
    <property type="match status" value="1"/>
</dbReference>
<dbReference type="InterPro" id="IPR004372">
    <property type="entry name" value="Ac/propionate_kinase"/>
</dbReference>
<dbReference type="InterPro" id="IPR000890">
    <property type="entry name" value="Aliphatic_acid_kin_short-chain"/>
</dbReference>
<dbReference type="InterPro" id="IPR023865">
    <property type="entry name" value="Aliphatic_acid_kinase_CS"/>
</dbReference>
<dbReference type="InterPro" id="IPR043129">
    <property type="entry name" value="ATPase_NBD"/>
</dbReference>
<dbReference type="NCBIfam" id="TIGR00016">
    <property type="entry name" value="ackA"/>
    <property type="match status" value="1"/>
</dbReference>
<dbReference type="PANTHER" id="PTHR21060">
    <property type="entry name" value="ACETATE KINASE"/>
    <property type="match status" value="1"/>
</dbReference>
<dbReference type="PANTHER" id="PTHR21060:SF21">
    <property type="entry name" value="ACETATE KINASE"/>
    <property type="match status" value="1"/>
</dbReference>
<dbReference type="Pfam" id="PF00871">
    <property type="entry name" value="Acetate_kinase"/>
    <property type="match status" value="1"/>
</dbReference>
<dbReference type="PIRSF" id="PIRSF000722">
    <property type="entry name" value="Acetate_prop_kin"/>
    <property type="match status" value="1"/>
</dbReference>
<dbReference type="PRINTS" id="PR00471">
    <property type="entry name" value="ACETATEKNASE"/>
</dbReference>
<dbReference type="SUPFAM" id="SSF53067">
    <property type="entry name" value="Actin-like ATPase domain"/>
    <property type="match status" value="2"/>
</dbReference>
<dbReference type="PROSITE" id="PS01075">
    <property type="entry name" value="ACETATE_KINASE_1"/>
    <property type="match status" value="1"/>
</dbReference>
<dbReference type="PROSITE" id="PS01076">
    <property type="entry name" value="ACETATE_KINASE_2"/>
    <property type="match status" value="1"/>
</dbReference>
<feature type="chain" id="PRO_1000002254" description="Acetate kinase">
    <location>
        <begin position="1"/>
        <end position="400"/>
    </location>
</feature>
<feature type="active site" description="Proton donor/acceptor" evidence="1">
    <location>
        <position position="148"/>
    </location>
</feature>
<feature type="binding site" evidence="1">
    <location>
        <position position="10"/>
    </location>
    <ligand>
        <name>Mg(2+)</name>
        <dbReference type="ChEBI" id="CHEBI:18420"/>
    </ligand>
</feature>
<feature type="binding site" evidence="1">
    <location>
        <position position="17"/>
    </location>
    <ligand>
        <name>ATP</name>
        <dbReference type="ChEBI" id="CHEBI:30616"/>
    </ligand>
</feature>
<feature type="binding site" evidence="1">
    <location>
        <position position="91"/>
    </location>
    <ligand>
        <name>substrate</name>
    </ligand>
</feature>
<feature type="binding site" evidence="1">
    <location>
        <begin position="208"/>
        <end position="212"/>
    </location>
    <ligand>
        <name>ATP</name>
        <dbReference type="ChEBI" id="CHEBI:30616"/>
    </ligand>
</feature>
<feature type="binding site" evidence="1">
    <location>
        <begin position="283"/>
        <end position="285"/>
    </location>
    <ligand>
        <name>ATP</name>
        <dbReference type="ChEBI" id="CHEBI:30616"/>
    </ligand>
</feature>
<feature type="binding site" evidence="1">
    <location>
        <begin position="331"/>
        <end position="335"/>
    </location>
    <ligand>
        <name>ATP</name>
        <dbReference type="ChEBI" id="CHEBI:30616"/>
    </ligand>
</feature>
<feature type="binding site" evidence="1">
    <location>
        <position position="385"/>
    </location>
    <ligand>
        <name>Mg(2+)</name>
        <dbReference type="ChEBI" id="CHEBI:18420"/>
    </ligand>
</feature>
<feature type="site" description="Transition state stabilizer" evidence="1">
    <location>
        <position position="180"/>
    </location>
</feature>
<feature type="site" description="Transition state stabilizer" evidence="1">
    <location>
        <position position="241"/>
    </location>
</feature>
<keyword id="KW-0067">ATP-binding</keyword>
<keyword id="KW-0963">Cytoplasm</keyword>
<keyword id="KW-0418">Kinase</keyword>
<keyword id="KW-0460">Magnesium</keyword>
<keyword id="KW-0479">Metal-binding</keyword>
<keyword id="KW-0547">Nucleotide-binding</keyword>
<keyword id="KW-1185">Reference proteome</keyword>
<keyword id="KW-0808">Transferase</keyword>
<reference key="1">
    <citation type="submission" date="2006-08" db="EMBL/GenBank/DDBJ databases">
        <title>Complete sequence of Shewanella frigidimarina NCIMB 400.</title>
        <authorList>
            <consortium name="US DOE Joint Genome Institute"/>
            <person name="Copeland A."/>
            <person name="Lucas S."/>
            <person name="Lapidus A."/>
            <person name="Barry K."/>
            <person name="Detter J.C."/>
            <person name="Glavina del Rio T."/>
            <person name="Hammon N."/>
            <person name="Israni S."/>
            <person name="Dalin E."/>
            <person name="Tice H."/>
            <person name="Pitluck S."/>
            <person name="Fredrickson J.K."/>
            <person name="Kolker E."/>
            <person name="McCuel L.A."/>
            <person name="DiChristina T."/>
            <person name="Nealson K.H."/>
            <person name="Newman D."/>
            <person name="Tiedje J.M."/>
            <person name="Zhou J."/>
            <person name="Romine M.F."/>
            <person name="Culley D.E."/>
            <person name="Serres M."/>
            <person name="Chertkov O."/>
            <person name="Brettin T."/>
            <person name="Bruce D."/>
            <person name="Han C."/>
            <person name="Tapia R."/>
            <person name="Gilna P."/>
            <person name="Schmutz J."/>
            <person name="Larimer F."/>
            <person name="Land M."/>
            <person name="Hauser L."/>
            <person name="Kyrpides N."/>
            <person name="Mikhailova N."/>
            <person name="Richardson P."/>
        </authorList>
    </citation>
    <scope>NUCLEOTIDE SEQUENCE [LARGE SCALE GENOMIC DNA]</scope>
    <source>
        <strain>NCIMB 400</strain>
    </source>
</reference>
<protein>
    <recommendedName>
        <fullName evidence="1">Acetate kinase</fullName>
        <ecNumber evidence="1">2.7.2.1</ecNumber>
    </recommendedName>
    <alternativeName>
        <fullName evidence="1">Acetokinase</fullName>
    </alternativeName>
</protein>
<sequence>MSDKLVLVLNCGSSSLKFAIIDAQSGDDKVSGLAECFGLEDSRIKWKFDGGKNEAKLGAFTAHREAVEFIVNNILAEHPELAAQIKAVGHRIVHGGEKFTRSVIVTPEVIQGIEDCASLAPLHNPAHLIGIRAALASFPALPQVAVFDTAFHQTMPEKAYIYALPYKLYREHSIRRYGMHGTSNIYICREAAKVLGKETKDTNIICAHLGNGASVTAIKDGKSVDTSMGLTPLEGLVMGTRCGDLDPSIIFHLVKQLGYTLDEVNNLLNKQSGLLGISELTNDCRGIEEGYQDGHKGATLALDIFCYRLAKYIASYTVPLGRLDAIIFTGGIGENSDLIREKVLNLLAIFNFKVDDNLNKAARFGQQGIITQVGSPIAMVIPTNEEWVIAEDAIKLITAK</sequence>
<organism>
    <name type="scientific">Shewanella frigidimarina (strain NCIMB 400)</name>
    <dbReference type="NCBI Taxonomy" id="318167"/>
    <lineage>
        <taxon>Bacteria</taxon>
        <taxon>Pseudomonadati</taxon>
        <taxon>Pseudomonadota</taxon>
        <taxon>Gammaproteobacteria</taxon>
        <taxon>Alteromonadales</taxon>
        <taxon>Shewanellaceae</taxon>
        <taxon>Shewanella</taxon>
    </lineage>
</organism>
<evidence type="ECO:0000255" key="1">
    <source>
        <dbReference type="HAMAP-Rule" id="MF_00020"/>
    </source>
</evidence>
<comment type="function">
    <text evidence="1">Catalyzes the formation of acetyl phosphate from acetate and ATP. Can also catalyze the reverse reaction.</text>
</comment>
<comment type="catalytic activity">
    <reaction evidence="1">
        <text>acetate + ATP = acetyl phosphate + ADP</text>
        <dbReference type="Rhea" id="RHEA:11352"/>
        <dbReference type="ChEBI" id="CHEBI:22191"/>
        <dbReference type="ChEBI" id="CHEBI:30089"/>
        <dbReference type="ChEBI" id="CHEBI:30616"/>
        <dbReference type="ChEBI" id="CHEBI:456216"/>
        <dbReference type="EC" id="2.7.2.1"/>
    </reaction>
</comment>
<comment type="cofactor">
    <cofactor evidence="1">
        <name>Mg(2+)</name>
        <dbReference type="ChEBI" id="CHEBI:18420"/>
    </cofactor>
    <cofactor evidence="1">
        <name>Mn(2+)</name>
        <dbReference type="ChEBI" id="CHEBI:29035"/>
    </cofactor>
    <text evidence="1">Mg(2+). Can also accept Mn(2+).</text>
</comment>
<comment type="pathway">
    <text evidence="1">Metabolic intermediate biosynthesis; acetyl-CoA biosynthesis; acetyl-CoA from acetate: step 1/2.</text>
</comment>
<comment type="subunit">
    <text evidence="1">Homodimer.</text>
</comment>
<comment type="subcellular location">
    <subcellularLocation>
        <location evidence="1">Cytoplasm</location>
    </subcellularLocation>
</comment>
<comment type="similarity">
    <text evidence="1">Belongs to the acetokinase family.</text>
</comment>
<gene>
    <name evidence="1" type="primary">ackA</name>
    <name type="ordered locus">Sfri_2476</name>
</gene>